<gene>
    <name evidence="1" type="primary">caiE</name>
    <name type="ordered locus">SeD_A0075</name>
</gene>
<organism>
    <name type="scientific">Salmonella dublin (strain CT_02021853)</name>
    <dbReference type="NCBI Taxonomy" id="439851"/>
    <lineage>
        <taxon>Bacteria</taxon>
        <taxon>Pseudomonadati</taxon>
        <taxon>Pseudomonadota</taxon>
        <taxon>Gammaproteobacteria</taxon>
        <taxon>Enterobacterales</taxon>
        <taxon>Enterobacteriaceae</taxon>
        <taxon>Salmonella</taxon>
    </lineage>
</organism>
<protein>
    <recommendedName>
        <fullName evidence="1">Carnitine operon protein CaiE</fullName>
    </recommendedName>
</protein>
<name>CAIE_SALDC</name>
<feature type="chain" id="PRO_1000200931" description="Carnitine operon protein CaiE">
    <location>
        <begin position="1"/>
        <end position="198"/>
    </location>
</feature>
<feature type="region of interest" description="Disordered" evidence="2">
    <location>
        <begin position="174"/>
        <end position="198"/>
    </location>
</feature>
<feature type="compositionally biased region" description="Basic and acidic residues" evidence="2">
    <location>
        <begin position="180"/>
        <end position="198"/>
    </location>
</feature>
<dbReference type="EMBL" id="CP001144">
    <property type="protein sequence ID" value="ACH75843.1"/>
    <property type="molecule type" value="Genomic_DNA"/>
</dbReference>
<dbReference type="RefSeq" id="WP_000122862.1">
    <property type="nucleotide sequence ID" value="NC_011205.1"/>
</dbReference>
<dbReference type="SMR" id="B5FHG3"/>
<dbReference type="KEGG" id="sed:SeD_A0075"/>
<dbReference type="HOGENOM" id="CLU_064827_4_2_6"/>
<dbReference type="UniPathway" id="UPA00117"/>
<dbReference type="Proteomes" id="UP000008322">
    <property type="component" value="Chromosome"/>
</dbReference>
<dbReference type="GO" id="GO:0016740">
    <property type="term" value="F:transferase activity"/>
    <property type="evidence" value="ECO:0007669"/>
    <property type="project" value="UniProtKB-KW"/>
</dbReference>
<dbReference type="GO" id="GO:0009437">
    <property type="term" value="P:carnitine metabolic process"/>
    <property type="evidence" value="ECO:0007669"/>
    <property type="project" value="UniProtKB-UniRule"/>
</dbReference>
<dbReference type="CDD" id="cd04745">
    <property type="entry name" value="LbH_paaY_like"/>
    <property type="match status" value="1"/>
</dbReference>
<dbReference type="FunFam" id="2.160.10.10:FF:000012">
    <property type="entry name" value="Carnitine operon protein CaiE"/>
    <property type="match status" value="1"/>
</dbReference>
<dbReference type="Gene3D" id="2.160.10.10">
    <property type="entry name" value="Hexapeptide repeat proteins"/>
    <property type="match status" value="1"/>
</dbReference>
<dbReference type="HAMAP" id="MF_01525">
    <property type="entry name" value="CaiE"/>
    <property type="match status" value="1"/>
</dbReference>
<dbReference type="InterPro" id="IPR023446">
    <property type="entry name" value="CaiE"/>
</dbReference>
<dbReference type="InterPro" id="IPR001451">
    <property type="entry name" value="Hexapep"/>
</dbReference>
<dbReference type="InterPro" id="IPR050484">
    <property type="entry name" value="Transf_Hexapept/Carb_Anhydrase"/>
</dbReference>
<dbReference type="InterPro" id="IPR011004">
    <property type="entry name" value="Trimer_LpxA-like_sf"/>
</dbReference>
<dbReference type="NCBIfam" id="NF010150">
    <property type="entry name" value="PRK13627.1"/>
    <property type="match status" value="1"/>
</dbReference>
<dbReference type="PANTHER" id="PTHR13061">
    <property type="entry name" value="DYNACTIN SUBUNIT P25"/>
    <property type="match status" value="1"/>
</dbReference>
<dbReference type="PANTHER" id="PTHR13061:SF29">
    <property type="entry name" value="GAMMA CARBONIC ANHYDRASE-LIKE 1, MITOCHONDRIAL-RELATED"/>
    <property type="match status" value="1"/>
</dbReference>
<dbReference type="Pfam" id="PF00132">
    <property type="entry name" value="Hexapep"/>
    <property type="match status" value="2"/>
</dbReference>
<dbReference type="SUPFAM" id="SSF51161">
    <property type="entry name" value="Trimeric LpxA-like enzymes"/>
    <property type="match status" value="1"/>
</dbReference>
<evidence type="ECO:0000255" key="1">
    <source>
        <dbReference type="HAMAP-Rule" id="MF_01525"/>
    </source>
</evidence>
<evidence type="ECO:0000256" key="2">
    <source>
        <dbReference type="SAM" id="MobiDB-lite"/>
    </source>
</evidence>
<reference key="1">
    <citation type="journal article" date="2011" name="J. Bacteriol.">
        <title>Comparative genomics of 28 Salmonella enterica isolates: evidence for CRISPR-mediated adaptive sublineage evolution.</title>
        <authorList>
            <person name="Fricke W.F."/>
            <person name="Mammel M.K."/>
            <person name="McDermott P.F."/>
            <person name="Tartera C."/>
            <person name="White D.G."/>
            <person name="Leclerc J.E."/>
            <person name="Ravel J."/>
            <person name="Cebula T.A."/>
        </authorList>
    </citation>
    <scope>NUCLEOTIDE SEQUENCE [LARGE SCALE GENOMIC DNA]</scope>
    <source>
        <strain>CT_02021853</strain>
    </source>
</reference>
<comment type="function">
    <text evidence="1">Overproduction of CaiE stimulates the activity of CaiB and CaiD.</text>
</comment>
<comment type="pathway">
    <text evidence="1">Amine and polyamine metabolism; carnitine metabolism.</text>
</comment>
<comment type="similarity">
    <text evidence="1">Belongs to the transferase hexapeptide repeat family.</text>
</comment>
<proteinExistence type="inferred from homology"/>
<sequence length="198" mass="21304">MSYYAFEGLIPVVHPDAFVHPSAVLIGDVIVGAGVYIGPLASLRGDYGRLILEAGSNLQDGCIMHGYCDTDTIVHENGHIGHGAILHGCVVGRDALVGMNSVIMDGAVIGEESIVAAMSFVKAGFQGEARQLLVGSPARVLRQVTDQELHWKRLNTKEYQDLAIRCRTGLSETKPLTQAEENRPRLKGTTDVKPKSAQ</sequence>
<accession>B5FHG3</accession>
<keyword id="KW-0677">Repeat</keyword>
<keyword id="KW-0808">Transferase</keyword>